<protein>
    <recommendedName>
        <fullName>5-hydroxytryptamine receptor 1B</fullName>
        <shortName>5-HT-1B</shortName>
        <shortName>5-HT1B</shortName>
    </recommendedName>
    <alternativeName>
        <fullName>Serotonin receptor 1B</fullName>
    </alternativeName>
</protein>
<sequence>MEEPGAQCAPPXPAGSETWVPQANLSSAPSQNCSAKDYIYQDSIALPWKVLLVMLLALITLATTLSNAFVIATVYRTRKLHTPANYLIASLAVTDLLVSILVMPISTMYTVTGRWTLGQVVCDFWLSSDITCCTASILHLCVIALDRYWAITDAVEYSAKRTPKRAAVMIALVWVFSISISLPPFFWRQAKAEEEVSECVVNTDHILYTVYSTVGAFYFPTLLLIALYGRIYVEARSRILKQTPNRTGKRLTRAQLITDSPGSTSSVTSINSRVPDVPSESGSPVYVNQVKVRVSDALLEKKKLMAARERKATKTLGIILGAFIVCWLPFFIISLVMPICKDACWFHLAIFDFFTWLGYLNSLINPIIYTMSNEDFKQAFHKLIRFKCTS</sequence>
<comment type="function">
    <text evidence="1">G-protein coupled receptor for 5-hydroxytryptamine (serotonin). Also functions as a receptor for ergot alkaloid derivatives, various anxiolytic and antidepressant drugs and other psychoactive substances, such as lysergic acid diethylamide (LSD). Ligand binding causes a conformation change that triggers signaling via guanine nucleotide-binding proteins (G proteins) and modulates the activity of downstream effectors, such as adenylate cyclase. HTR1B is coupled to G(i)/G(o) G alpha proteins and mediates inhibitory neurotransmission by inhibiting adenylate cyclase activity. Arrestin family members inhibit signaling via G proteins and mediate activation of alternative signaling pathways. Regulates the release of 5-hydroxytryptamine, dopamine and acetylcholine in the brain, and thereby affects neural activity, nociceptive processing, pain perception, mood and behavior. Besides, plays a role in vasoconstriction of cerebral arteries.</text>
</comment>
<comment type="subunit">
    <text evidence="1">Homodimer. Heterodimer with HTR1D.</text>
</comment>
<comment type="subcellular location">
    <subcellularLocation>
        <location evidence="1">Cell membrane</location>
        <topology evidence="1">Multi-pass membrane protein</topology>
    </subcellularLocation>
</comment>
<comment type="domain">
    <text evidence="1">Ligands are bound in a hydrophobic pocket formed by the transmembrane helices.</text>
</comment>
<comment type="domain">
    <text evidence="1">A residue in the 7th transmembrane region ('Thr-355' in human, 'Asn-351' in mouse and rat) is important for species-specific sensitivity to various agonists.</text>
</comment>
<comment type="PTM">
    <text evidence="1">Phosphorylated. Desensitization of the receptor may be mediated by its phosphorylation.</text>
</comment>
<comment type="PTM">
    <text evidence="1">Palmitoylated.</text>
</comment>
<comment type="similarity">
    <text evidence="4">Belongs to the G-protein coupled receptor 1 family.</text>
</comment>
<name>5HT1B_GORGO</name>
<proteinExistence type="inferred from homology"/>
<keyword id="KW-0085">Behavior</keyword>
<keyword id="KW-1003">Cell membrane</keyword>
<keyword id="KW-1015">Disulfide bond</keyword>
<keyword id="KW-0297">G-protein coupled receptor</keyword>
<keyword id="KW-0325">Glycoprotein</keyword>
<keyword id="KW-0449">Lipoprotein</keyword>
<keyword id="KW-0472">Membrane</keyword>
<keyword id="KW-0564">Palmitate</keyword>
<keyword id="KW-0597">Phosphoprotein</keyword>
<keyword id="KW-0675">Receptor</keyword>
<keyword id="KW-1185">Reference proteome</keyword>
<keyword id="KW-0807">Transducer</keyword>
<keyword id="KW-0812">Transmembrane</keyword>
<keyword id="KW-1133">Transmembrane helix</keyword>
<accession>Q9N2B7</accession>
<gene>
    <name type="primary">HTR1B</name>
</gene>
<reference key="1">
    <citation type="journal article" date="2004" name="Mol. Biol. Evol.">
        <title>Human-specific amino acid changes found in 103 protein-coding genes.</title>
        <authorList>
            <person name="Kitano T."/>
            <person name="Liu Y.-H."/>
            <person name="Ueda S."/>
            <person name="Saitou N."/>
        </authorList>
    </citation>
    <scope>NUCLEOTIDE SEQUENCE [GENOMIC DNA]</scope>
</reference>
<evidence type="ECO:0000250" key="1">
    <source>
        <dbReference type="UniProtKB" id="P28222"/>
    </source>
</evidence>
<evidence type="ECO:0000250" key="2">
    <source>
        <dbReference type="UniProtKB" id="P41595"/>
    </source>
</evidence>
<evidence type="ECO:0000255" key="3"/>
<evidence type="ECO:0000255" key="4">
    <source>
        <dbReference type="PROSITE-ProRule" id="PRU00521"/>
    </source>
</evidence>
<evidence type="ECO:0000256" key="5">
    <source>
        <dbReference type="SAM" id="MobiDB-lite"/>
    </source>
</evidence>
<evidence type="ECO:0000305" key="6"/>
<feature type="chain" id="PRO_0000068915" description="5-hydroxytryptamine receptor 1B">
    <location>
        <begin position="1"/>
        <end position="390"/>
    </location>
</feature>
<feature type="topological domain" description="Extracellular" evidence="1">
    <location>
        <begin position="1"/>
        <end position="46"/>
    </location>
</feature>
<feature type="transmembrane region" description="Helical; Name=1" evidence="1">
    <location>
        <begin position="47"/>
        <end position="72"/>
    </location>
</feature>
<feature type="topological domain" description="Cytoplasmic" evidence="1">
    <location>
        <begin position="73"/>
        <end position="86"/>
    </location>
</feature>
<feature type="transmembrane region" description="Helical; Name=2" evidence="1">
    <location>
        <begin position="87"/>
        <end position="111"/>
    </location>
</feature>
<feature type="topological domain" description="Extracellular" evidence="1">
    <location>
        <begin position="112"/>
        <end position="119"/>
    </location>
</feature>
<feature type="transmembrane region" description="Helical; Name=3" evidence="1">
    <location>
        <begin position="120"/>
        <end position="145"/>
    </location>
</feature>
<feature type="topological domain" description="Cytoplasmic" evidence="1">
    <location>
        <begin position="146"/>
        <end position="165"/>
    </location>
</feature>
<feature type="transmembrane region" description="Helical; Name=4" evidence="1">
    <location>
        <begin position="166"/>
        <end position="184"/>
    </location>
</feature>
<feature type="topological domain" description="Extracellular" evidence="1 6">
    <location>
        <begin position="185"/>
        <end position="205"/>
    </location>
</feature>
<feature type="transmembrane region" description="Helical; Name=5" evidence="1">
    <location>
        <begin position="206"/>
        <end position="229"/>
    </location>
</feature>
<feature type="topological domain" description="Cytoplasmic" evidence="1">
    <location>
        <begin position="230"/>
        <end position="315"/>
    </location>
</feature>
<feature type="transmembrane region" description="Helical; Name=6" evidence="1">
    <location>
        <begin position="316"/>
        <end position="337"/>
    </location>
</feature>
<feature type="topological domain" description="Extracellular" evidence="1">
    <location>
        <begin position="338"/>
        <end position="347"/>
    </location>
</feature>
<feature type="transmembrane region" description="Helical; Name=7" evidence="1">
    <location>
        <begin position="348"/>
        <end position="370"/>
    </location>
</feature>
<feature type="topological domain" description="Cytoplasmic" evidence="1">
    <location>
        <begin position="371"/>
        <end position="390"/>
    </location>
</feature>
<feature type="region of interest" description="Disordered" evidence="5">
    <location>
        <begin position="259"/>
        <end position="281"/>
    </location>
</feature>
<feature type="short sequence motif" description="DRY motif; important for ligand-induced conformation changes and signaling" evidence="2">
    <location>
        <begin position="146"/>
        <end position="148"/>
    </location>
</feature>
<feature type="short sequence motif" description="NPxxY motif; important for ligand-induced conformation changes and signaling" evidence="2">
    <location>
        <begin position="365"/>
        <end position="369"/>
    </location>
</feature>
<feature type="compositionally biased region" description="Polar residues" evidence="5">
    <location>
        <begin position="259"/>
        <end position="272"/>
    </location>
</feature>
<feature type="binding site" evidence="1">
    <location>
        <position position="129"/>
    </location>
    <ligand>
        <name>ergotamine</name>
        <dbReference type="ChEBI" id="CHEBI:190463"/>
        <note>agonist</note>
    </ligand>
</feature>
<feature type="binding site" evidence="1">
    <location>
        <position position="134"/>
    </location>
    <ligand>
        <name>ergotamine</name>
        <dbReference type="ChEBI" id="CHEBI:190463"/>
        <note>agonist</note>
    </ligand>
</feature>
<feature type="binding site" evidence="1">
    <location>
        <position position="201"/>
    </location>
    <ligand>
        <name>ergotamine</name>
        <dbReference type="ChEBI" id="CHEBI:190463"/>
        <note>agonist</note>
    </ligand>
</feature>
<feature type="site" description="Important for species-specific agonist sensitivity" evidence="1">
    <location>
        <position position="355"/>
    </location>
</feature>
<feature type="lipid moiety-binding region" description="S-palmitoyl cysteine" evidence="3">
    <location>
        <position position="388"/>
    </location>
</feature>
<feature type="glycosylation site" description="N-linked (GlcNAc...) asparagine" evidence="3">
    <location>
        <position position="24"/>
    </location>
</feature>
<feature type="glycosylation site" description="N-linked (GlcNAc...) asparagine" evidence="3">
    <location>
        <position position="32"/>
    </location>
</feature>
<feature type="disulfide bond" evidence="4">
    <location>
        <begin position="122"/>
        <end position="199"/>
    </location>
</feature>
<organism>
    <name type="scientific">Gorilla gorilla gorilla</name>
    <name type="common">Western lowland gorilla</name>
    <dbReference type="NCBI Taxonomy" id="9595"/>
    <lineage>
        <taxon>Eukaryota</taxon>
        <taxon>Metazoa</taxon>
        <taxon>Chordata</taxon>
        <taxon>Craniata</taxon>
        <taxon>Vertebrata</taxon>
        <taxon>Euteleostomi</taxon>
        <taxon>Mammalia</taxon>
        <taxon>Eutheria</taxon>
        <taxon>Euarchontoglires</taxon>
        <taxon>Primates</taxon>
        <taxon>Haplorrhini</taxon>
        <taxon>Catarrhini</taxon>
        <taxon>Hominidae</taxon>
        <taxon>Gorilla</taxon>
    </lineage>
</organism>
<dbReference type="EMBL" id="AB041372">
    <property type="protein sequence ID" value="BAA94457.1"/>
    <property type="molecule type" value="Genomic_DNA"/>
</dbReference>
<dbReference type="FunCoup" id="Q9N2B7">
    <property type="interactions" value="874"/>
</dbReference>
<dbReference type="STRING" id="9593.ENSGGOP00000019686"/>
<dbReference type="BindingDB" id="Q9N2B7"/>
<dbReference type="ChEMBL" id="CHEMBL2304408"/>
<dbReference type="DrugCentral" id="Q9N2B7"/>
<dbReference type="GlyCosmos" id="Q9N2B7">
    <property type="glycosylation" value="2 sites, No reported glycans"/>
</dbReference>
<dbReference type="eggNOG" id="KOG3656">
    <property type="taxonomic scope" value="Eukaryota"/>
</dbReference>
<dbReference type="InParanoid" id="Q9N2B7"/>
<dbReference type="Proteomes" id="UP000001519">
    <property type="component" value="Unplaced"/>
</dbReference>
<dbReference type="GO" id="GO:0030425">
    <property type="term" value="C:dendrite"/>
    <property type="evidence" value="ECO:0000318"/>
    <property type="project" value="GO_Central"/>
</dbReference>
<dbReference type="GO" id="GO:0005886">
    <property type="term" value="C:plasma membrane"/>
    <property type="evidence" value="ECO:0000250"/>
    <property type="project" value="UniProtKB"/>
</dbReference>
<dbReference type="GO" id="GO:0045202">
    <property type="term" value="C:synapse"/>
    <property type="evidence" value="ECO:0007669"/>
    <property type="project" value="GOC"/>
</dbReference>
<dbReference type="GO" id="GO:0004993">
    <property type="term" value="F:G protein-coupled serotonin receptor activity"/>
    <property type="evidence" value="ECO:0000250"/>
    <property type="project" value="UniProtKB"/>
</dbReference>
<dbReference type="GO" id="GO:0001586">
    <property type="term" value="F:Gi/o-coupled serotonin receptor activity"/>
    <property type="evidence" value="ECO:0007669"/>
    <property type="project" value="UniProtKB-ARBA"/>
</dbReference>
<dbReference type="GO" id="GO:0030594">
    <property type="term" value="F:neurotransmitter receptor activity"/>
    <property type="evidence" value="ECO:0000318"/>
    <property type="project" value="GO_Central"/>
</dbReference>
<dbReference type="GO" id="GO:0099589">
    <property type="term" value="F:serotonin receptor activity"/>
    <property type="evidence" value="ECO:0007669"/>
    <property type="project" value="UniProtKB-ARBA"/>
</dbReference>
<dbReference type="GO" id="GO:0007198">
    <property type="term" value="P:adenylate cyclase-inhibiting serotonin receptor signaling pathway"/>
    <property type="evidence" value="ECO:0000250"/>
    <property type="project" value="UniProtKB"/>
</dbReference>
<dbReference type="GO" id="GO:0046849">
    <property type="term" value="P:bone remodeling"/>
    <property type="evidence" value="ECO:0007669"/>
    <property type="project" value="InterPro"/>
</dbReference>
<dbReference type="GO" id="GO:0071312">
    <property type="term" value="P:cellular response to alkaloid"/>
    <property type="evidence" value="ECO:0000250"/>
    <property type="project" value="UniProtKB"/>
</dbReference>
<dbReference type="GO" id="GO:0071466">
    <property type="term" value="P:cellular response to xenobiotic stimulus"/>
    <property type="evidence" value="ECO:0000250"/>
    <property type="project" value="UniProtKB"/>
</dbReference>
<dbReference type="GO" id="GO:0007268">
    <property type="term" value="P:chemical synaptic transmission"/>
    <property type="evidence" value="ECO:0000318"/>
    <property type="project" value="GO_Central"/>
</dbReference>
<dbReference type="GO" id="GO:0007187">
    <property type="term" value="P:G protein-coupled receptor signaling pathway, coupled to cyclic nucleotide second messenger"/>
    <property type="evidence" value="ECO:0000318"/>
    <property type="project" value="GO_Central"/>
</dbReference>
<dbReference type="GO" id="GO:0014063">
    <property type="term" value="P:negative regulation of serotonin secretion"/>
    <property type="evidence" value="ECO:0000250"/>
    <property type="project" value="UniProtKB"/>
</dbReference>
<dbReference type="GO" id="GO:0050795">
    <property type="term" value="P:regulation of behavior"/>
    <property type="evidence" value="ECO:0007669"/>
    <property type="project" value="InterPro"/>
</dbReference>
<dbReference type="GO" id="GO:0042310">
    <property type="term" value="P:vasoconstriction"/>
    <property type="evidence" value="ECO:0007669"/>
    <property type="project" value="InterPro"/>
</dbReference>
<dbReference type="CDD" id="cd15333">
    <property type="entry name" value="7tmA_5-HT1B_1D"/>
    <property type="match status" value="1"/>
</dbReference>
<dbReference type="Gene3D" id="1.20.1070.10">
    <property type="entry name" value="Rhodopsin 7-helix transmembrane proteins"/>
    <property type="match status" value="1"/>
</dbReference>
<dbReference type="InterPro" id="IPR002147">
    <property type="entry name" value="5HT1B_rcpt"/>
</dbReference>
<dbReference type="InterPro" id="IPR002231">
    <property type="entry name" value="5HT_rcpt"/>
</dbReference>
<dbReference type="InterPro" id="IPR000276">
    <property type="entry name" value="GPCR_Rhodpsn"/>
</dbReference>
<dbReference type="InterPro" id="IPR017452">
    <property type="entry name" value="GPCR_Rhodpsn_7TM"/>
</dbReference>
<dbReference type="PANTHER" id="PTHR24248:SF201">
    <property type="entry name" value="5-HYDROXYTRYPTAMINE RECEPTOR 1B"/>
    <property type="match status" value="1"/>
</dbReference>
<dbReference type="PANTHER" id="PTHR24248">
    <property type="entry name" value="ADRENERGIC RECEPTOR-RELATED G-PROTEIN COUPLED RECEPTOR"/>
    <property type="match status" value="1"/>
</dbReference>
<dbReference type="Pfam" id="PF00001">
    <property type="entry name" value="7tm_1"/>
    <property type="match status" value="1"/>
</dbReference>
<dbReference type="PRINTS" id="PR00513">
    <property type="entry name" value="5HT1BRECEPTR"/>
</dbReference>
<dbReference type="PRINTS" id="PR01101">
    <property type="entry name" value="5HTRECEPTOR"/>
</dbReference>
<dbReference type="PRINTS" id="PR00237">
    <property type="entry name" value="GPCRRHODOPSN"/>
</dbReference>
<dbReference type="SMART" id="SM01381">
    <property type="entry name" value="7TM_GPCR_Srsx"/>
    <property type="match status" value="1"/>
</dbReference>
<dbReference type="SUPFAM" id="SSF81321">
    <property type="entry name" value="Family A G protein-coupled receptor-like"/>
    <property type="match status" value="1"/>
</dbReference>
<dbReference type="PROSITE" id="PS00237">
    <property type="entry name" value="G_PROTEIN_RECEP_F1_1"/>
    <property type="match status" value="1"/>
</dbReference>
<dbReference type="PROSITE" id="PS50262">
    <property type="entry name" value="G_PROTEIN_RECEP_F1_2"/>
    <property type="match status" value="1"/>
</dbReference>